<evidence type="ECO:0000305" key="1"/>
<evidence type="ECO:0000305" key="2">
    <source>
    </source>
</evidence>
<accession>Q12281</accession>
<organism>
    <name type="scientific">Saccharomyces cerevisiae (strain ATCC 204508 / S288c)</name>
    <name type="common">Baker's yeast</name>
    <dbReference type="NCBI Taxonomy" id="559292"/>
    <lineage>
        <taxon>Eukaryota</taxon>
        <taxon>Fungi</taxon>
        <taxon>Dikarya</taxon>
        <taxon>Ascomycota</taxon>
        <taxon>Saccharomycotina</taxon>
        <taxon>Saccharomycetes</taxon>
        <taxon>Saccharomycetales</taxon>
        <taxon>Saccharomycetaceae</taxon>
        <taxon>Saccharomyces</taxon>
    </lineage>
</organism>
<protein>
    <recommendedName>
        <fullName>Putative uncharacterized protein YDL032w</fullName>
    </recommendedName>
</protein>
<feature type="chain" id="PRO_0000299848" description="Putative uncharacterized protein YDL032w">
    <location>
        <begin position="1"/>
        <end position="103"/>
    </location>
</feature>
<name>YD032_YEAST</name>
<reference key="1">
    <citation type="journal article" date="1997" name="Yeast">
        <title>The sequence of a 36.7 kb segment on the left arm of chromosome IV from Saccharomyces cerevisiae reveals 20 non-overlapping open reading frames (ORFs) including SIT4, FAD1, NAM1, RNA11, SIR2, NAT1, PRP9, ACT2 and MPS1 and 11 new ORFs.</title>
        <authorList>
            <person name="Saren A.-M."/>
            <person name="Laamanen P."/>
            <person name="Lejarcegui J.B."/>
            <person name="Paulin L."/>
        </authorList>
    </citation>
    <scope>NUCLEOTIDE SEQUENCE [GENOMIC DNA]</scope>
    <source>
        <strain>ATCC 204508 / S288c</strain>
    </source>
</reference>
<reference key="2">
    <citation type="journal article" date="1997" name="Nature">
        <title>The nucleotide sequence of Saccharomyces cerevisiae chromosome IV.</title>
        <authorList>
            <person name="Jacq C."/>
            <person name="Alt-Moerbe J."/>
            <person name="Andre B."/>
            <person name="Arnold W."/>
            <person name="Bahr A."/>
            <person name="Ballesta J.P.G."/>
            <person name="Bargues M."/>
            <person name="Baron L."/>
            <person name="Becker A."/>
            <person name="Biteau N."/>
            <person name="Bloecker H."/>
            <person name="Blugeon C."/>
            <person name="Boskovic J."/>
            <person name="Brandt P."/>
            <person name="Brueckner M."/>
            <person name="Buitrago M.J."/>
            <person name="Coster F."/>
            <person name="Delaveau T."/>
            <person name="del Rey F."/>
            <person name="Dujon B."/>
            <person name="Eide L.G."/>
            <person name="Garcia-Cantalejo J.M."/>
            <person name="Goffeau A."/>
            <person name="Gomez-Peris A."/>
            <person name="Granotier C."/>
            <person name="Hanemann V."/>
            <person name="Hankeln T."/>
            <person name="Hoheisel J.D."/>
            <person name="Jaeger W."/>
            <person name="Jimenez A."/>
            <person name="Jonniaux J.-L."/>
            <person name="Kraemer C."/>
            <person name="Kuester H."/>
            <person name="Laamanen P."/>
            <person name="Legros Y."/>
            <person name="Louis E.J."/>
            <person name="Moeller-Rieker S."/>
            <person name="Monnet A."/>
            <person name="Moro M."/>
            <person name="Mueller-Auer S."/>
            <person name="Nussbaumer B."/>
            <person name="Paricio N."/>
            <person name="Paulin L."/>
            <person name="Perea J."/>
            <person name="Perez-Alonso M."/>
            <person name="Perez-Ortin J.E."/>
            <person name="Pohl T.M."/>
            <person name="Prydz H."/>
            <person name="Purnelle B."/>
            <person name="Rasmussen S.W."/>
            <person name="Remacha M.A."/>
            <person name="Revuelta J.L."/>
            <person name="Rieger M."/>
            <person name="Salom D."/>
            <person name="Saluz H.P."/>
            <person name="Saiz J.E."/>
            <person name="Saren A.-M."/>
            <person name="Schaefer M."/>
            <person name="Scharfe M."/>
            <person name="Schmidt E.R."/>
            <person name="Schneider C."/>
            <person name="Scholler P."/>
            <person name="Schwarz S."/>
            <person name="Soler-Mira A."/>
            <person name="Urrestarazu L.A."/>
            <person name="Verhasselt P."/>
            <person name="Vissers S."/>
            <person name="Voet M."/>
            <person name="Volckaert G."/>
            <person name="Wagner G."/>
            <person name="Wambutt R."/>
            <person name="Wedler E."/>
            <person name="Wedler H."/>
            <person name="Woelfl S."/>
            <person name="Harris D.E."/>
            <person name="Bowman S."/>
            <person name="Brown D."/>
            <person name="Churcher C.M."/>
            <person name="Connor R."/>
            <person name="Dedman K."/>
            <person name="Gentles S."/>
            <person name="Hamlin N."/>
            <person name="Hunt S."/>
            <person name="Jones L."/>
            <person name="McDonald S."/>
            <person name="Murphy L.D."/>
            <person name="Niblett D."/>
            <person name="Odell C."/>
            <person name="Oliver K."/>
            <person name="Rajandream M.A."/>
            <person name="Richards C."/>
            <person name="Shore L."/>
            <person name="Walsh S.V."/>
            <person name="Barrell B.G."/>
            <person name="Dietrich F.S."/>
            <person name="Mulligan J.T."/>
            <person name="Allen E."/>
            <person name="Araujo R."/>
            <person name="Aviles E."/>
            <person name="Berno A."/>
            <person name="Carpenter J."/>
            <person name="Chen E."/>
            <person name="Cherry J.M."/>
            <person name="Chung E."/>
            <person name="Duncan M."/>
            <person name="Hunicke-Smith S."/>
            <person name="Hyman R.W."/>
            <person name="Komp C."/>
            <person name="Lashkari D."/>
            <person name="Lew H."/>
            <person name="Lin D."/>
            <person name="Mosedale D."/>
            <person name="Nakahara K."/>
            <person name="Namath A."/>
            <person name="Oefner P."/>
            <person name="Oh C."/>
            <person name="Petel F.X."/>
            <person name="Roberts D."/>
            <person name="Schramm S."/>
            <person name="Schroeder M."/>
            <person name="Shogren T."/>
            <person name="Shroff N."/>
            <person name="Winant A."/>
            <person name="Yelton M.A."/>
            <person name="Botstein D."/>
            <person name="Davis R.W."/>
            <person name="Johnston M."/>
            <person name="Andrews S."/>
            <person name="Brinkman R."/>
            <person name="Cooper J."/>
            <person name="Ding H."/>
            <person name="Du Z."/>
            <person name="Favello A."/>
            <person name="Fulton L."/>
            <person name="Gattung S."/>
            <person name="Greco T."/>
            <person name="Hallsworth K."/>
            <person name="Hawkins J."/>
            <person name="Hillier L.W."/>
            <person name="Jier M."/>
            <person name="Johnson D."/>
            <person name="Johnston L."/>
            <person name="Kirsten J."/>
            <person name="Kucaba T."/>
            <person name="Langston Y."/>
            <person name="Latreille P."/>
            <person name="Le T."/>
            <person name="Mardis E."/>
            <person name="Menezes S."/>
            <person name="Miller N."/>
            <person name="Nhan M."/>
            <person name="Pauley A."/>
            <person name="Peluso D."/>
            <person name="Rifkin L."/>
            <person name="Riles L."/>
            <person name="Taich A."/>
            <person name="Trevaskis E."/>
            <person name="Vignati D."/>
            <person name="Wilcox L."/>
            <person name="Wohldman P."/>
            <person name="Vaudin M."/>
            <person name="Wilson R."/>
            <person name="Waterston R."/>
            <person name="Albermann K."/>
            <person name="Hani J."/>
            <person name="Heumann K."/>
            <person name="Kleine K."/>
            <person name="Mewes H.-W."/>
            <person name="Zollner A."/>
            <person name="Zaccaria P."/>
        </authorList>
    </citation>
    <scope>NUCLEOTIDE SEQUENCE [LARGE SCALE GENOMIC DNA]</scope>
    <source>
        <strain>ATCC 204508 / S288c</strain>
    </source>
</reference>
<reference key="3">
    <citation type="journal article" date="2014" name="G3 (Bethesda)">
        <title>The reference genome sequence of Saccharomyces cerevisiae: Then and now.</title>
        <authorList>
            <person name="Engel S.R."/>
            <person name="Dietrich F.S."/>
            <person name="Fisk D.G."/>
            <person name="Binkley G."/>
            <person name="Balakrishnan R."/>
            <person name="Costanzo M.C."/>
            <person name="Dwight S.S."/>
            <person name="Hitz B.C."/>
            <person name="Karra K."/>
            <person name="Nash R.S."/>
            <person name="Weng S."/>
            <person name="Wong E.D."/>
            <person name="Lloyd P."/>
            <person name="Skrzypek M.S."/>
            <person name="Miyasato S.R."/>
            <person name="Simison M."/>
            <person name="Cherry J.M."/>
        </authorList>
    </citation>
    <scope>GENOME REANNOTATION</scope>
    <source>
        <strain>ATCC 204508 / S288c</strain>
    </source>
</reference>
<reference key="4">
    <citation type="journal article" date="2007" name="Genome Res.">
        <title>Approaching a complete repository of sequence-verified protein-encoding clones for Saccharomyces cerevisiae.</title>
        <authorList>
            <person name="Hu Y."/>
            <person name="Rolfs A."/>
            <person name="Bhullar B."/>
            <person name="Murthy T.V.S."/>
            <person name="Zhu C."/>
            <person name="Berger M.F."/>
            <person name="Camargo A.A."/>
            <person name="Kelley F."/>
            <person name="McCarron S."/>
            <person name="Jepson D."/>
            <person name="Richardson A."/>
            <person name="Raphael J."/>
            <person name="Moreira D."/>
            <person name="Taycher E."/>
            <person name="Zuo D."/>
            <person name="Mohr S."/>
            <person name="Kane M.F."/>
            <person name="Williamson J."/>
            <person name="Simpson A.J.G."/>
            <person name="Bulyk M.L."/>
            <person name="Harlow E."/>
            <person name="Marsischky G."/>
            <person name="Kolodner R.D."/>
            <person name="LaBaer J."/>
        </authorList>
    </citation>
    <scope>NUCLEOTIDE SEQUENCE [GENOMIC DNA]</scope>
    <source>
        <strain>ATCC 204508 / S288c</strain>
    </source>
</reference>
<dbReference type="EMBL" id="Z71781">
    <property type="protein sequence ID" value="CAA96457.1"/>
    <property type="molecule type" value="Genomic_DNA"/>
</dbReference>
<dbReference type="EMBL" id="Z74081">
    <property type="protein sequence ID" value="CAA98592.1"/>
    <property type="molecule type" value="Genomic_DNA"/>
</dbReference>
<dbReference type="EMBL" id="AY693284">
    <property type="protein sequence ID" value="AAT93303.1"/>
    <property type="molecule type" value="Genomic_DNA"/>
</dbReference>
<dbReference type="PIR" id="S67565">
    <property type="entry name" value="S67565"/>
</dbReference>
<dbReference type="STRING" id="4932.YDL032W"/>
<dbReference type="PaxDb" id="4932-YDL032W"/>
<dbReference type="EnsemblFungi" id="YDL032W_mRNA">
    <property type="protein sequence ID" value="YDL032W"/>
    <property type="gene ID" value="YDL032W"/>
</dbReference>
<dbReference type="AGR" id="SGD:S000002190"/>
<dbReference type="SGD" id="S000002190">
    <property type="gene designation" value="YDL032W"/>
</dbReference>
<dbReference type="HOGENOM" id="CLU_2265802_0_0_1"/>
<gene>
    <name type="ordered locus">YDL032W</name>
    <name type="ORF">D2767</name>
</gene>
<comment type="miscellaneous">
    <text evidence="1">Partially overlaps SLM3.</text>
</comment>
<comment type="caution">
    <text evidence="2">Product of a dubious gene prediction unlikely to encode a functional protein. Because of that it is not part of the S.cerevisiae S288c complete/reference proteome set.</text>
</comment>
<proteinExistence type="uncertain"/>
<sequence>MAPCQGRPKIVIQTSSAYILLGYLEILRQIVLPPQRNLPQMTLPLSRCQTLPVAAVVCTVKHSSVLLNLNILPALLSDLNRLPNQYAHIFNVLVCFQTFILLQ</sequence>